<protein>
    <recommendedName>
        <fullName evidence="1">Large ribosomal subunit protein uL5</fullName>
    </recommendedName>
    <alternativeName>
        <fullName evidence="2">50S ribosomal protein L5</fullName>
    </alternativeName>
</protein>
<evidence type="ECO:0000255" key="1">
    <source>
        <dbReference type="HAMAP-Rule" id="MF_01333"/>
    </source>
</evidence>
<evidence type="ECO:0000305" key="2"/>
<sequence length="179" mass="19942">MTLKNRYKESIRPKLLKDLGLKNIHQVPKVVKVNVNRGLGEAASNSKSLEASLNEMATITGQKALVTRAKKAIAGFKIREGMPIGCTVTLRGDRMYSFLERFINLALPRIRDFRGVNPKSFDGRGNYTVGVKEQLIFPEISFDKIDSIRGMDITIVTSARSDQEGKALLQELGMPFSKN</sequence>
<name>RL5_PROM9</name>
<comment type="function">
    <text evidence="1">This is one of the proteins that bind and probably mediate the attachment of the 5S RNA into the large ribosomal subunit, where it forms part of the central protuberance. In the 70S ribosome it contacts protein S13 of the 30S subunit (bridge B1b), connecting the 2 subunits; this bridge is implicated in subunit movement. Contacts the P site tRNA; the 5S rRNA and some of its associated proteins might help stabilize positioning of ribosome-bound tRNAs.</text>
</comment>
<comment type="subunit">
    <text evidence="1">Part of the 50S ribosomal subunit; part of the 5S rRNA/L5/L18/L25 subcomplex. Contacts the 5S rRNA and the P site tRNA. Forms a bridge to the 30S subunit in the 70S ribosome.</text>
</comment>
<comment type="similarity">
    <text evidence="1">Belongs to the universal ribosomal protein uL5 family.</text>
</comment>
<gene>
    <name evidence="1" type="primary">rplE</name>
    <name evidence="1" type="synonym">rpl5</name>
    <name type="ordered locus">PMT9312_1638</name>
</gene>
<accession>Q318J6</accession>
<reference key="1">
    <citation type="journal article" date="2006" name="Science">
        <title>Genomic islands and the ecology and evolution of Prochlorococcus.</title>
        <authorList>
            <person name="Coleman M.L."/>
            <person name="Sullivan M.B."/>
            <person name="Martiny A.C."/>
            <person name="Steglich C."/>
            <person name="Barry K."/>
            <person name="Delong E.F."/>
            <person name="Chisholm S.W."/>
        </authorList>
    </citation>
    <scope>NUCLEOTIDE SEQUENCE [LARGE SCALE GENOMIC DNA]</scope>
    <source>
        <strain>MIT 9312</strain>
    </source>
</reference>
<organism>
    <name type="scientific">Prochlorococcus marinus (strain MIT 9312)</name>
    <dbReference type="NCBI Taxonomy" id="74546"/>
    <lineage>
        <taxon>Bacteria</taxon>
        <taxon>Bacillati</taxon>
        <taxon>Cyanobacteriota</taxon>
        <taxon>Cyanophyceae</taxon>
        <taxon>Synechococcales</taxon>
        <taxon>Prochlorococcaceae</taxon>
        <taxon>Prochlorococcus</taxon>
    </lineage>
</organism>
<feature type="chain" id="PRO_0000243038" description="Large ribosomal subunit protein uL5">
    <location>
        <begin position="1"/>
        <end position="179"/>
    </location>
</feature>
<keyword id="KW-0687">Ribonucleoprotein</keyword>
<keyword id="KW-0689">Ribosomal protein</keyword>
<keyword id="KW-0694">RNA-binding</keyword>
<keyword id="KW-0699">rRNA-binding</keyword>
<keyword id="KW-0820">tRNA-binding</keyword>
<proteinExistence type="inferred from homology"/>
<dbReference type="EMBL" id="CP000111">
    <property type="protein sequence ID" value="ABB50699.1"/>
    <property type="molecule type" value="Genomic_DNA"/>
</dbReference>
<dbReference type="RefSeq" id="WP_011377181.1">
    <property type="nucleotide sequence ID" value="NC_007577.1"/>
</dbReference>
<dbReference type="SMR" id="Q318J6"/>
<dbReference type="STRING" id="74546.PMT9312_1638"/>
<dbReference type="KEGG" id="pmi:PMT9312_1638"/>
<dbReference type="eggNOG" id="COG0094">
    <property type="taxonomic scope" value="Bacteria"/>
</dbReference>
<dbReference type="HOGENOM" id="CLU_061015_2_1_3"/>
<dbReference type="OrthoDB" id="9806626at2"/>
<dbReference type="Proteomes" id="UP000002715">
    <property type="component" value="Chromosome"/>
</dbReference>
<dbReference type="GO" id="GO:1990904">
    <property type="term" value="C:ribonucleoprotein complex"/>
    <property type="evidence" value="ECO:0007669"/>
    <property type="project" value="UniProtKB-KW"/>
</dbReference>
<dbReference type="GO" id="GO:0005840">
    <property type="term" value="C:ribosome"/>
    <property type="evidence" value="ECO:0007669"/>
    <property type="project" value="UniProtKB-KW"/>
</dbReference>
<dbReference type="GO" id="GO:0019843">
    <property type="term" value="F:rRNA binding"/>
    <property type="evidence" value="ECO:0007669"/>
    <property type="project" value="UniProtKB-UniRule"/>
</dbReference>
<dbReference type="GO" id="GO:0003735">
    <property type="term" value="F:structural constituent of ribosome"/>
    <property type="evidence" value="ECO:0007669"/>
    <property type="project" value="InterPro"/>
</dbReference>
<dbReference type="GO" id="GO:0000049">
    <property type="term" value="F:tRNA binding"/>
    <property type="evidence" value="ECO:0007669"/>
    <property type="project" value="UniProtKB-UniRule"/>
</dbReference>
<dbReference type="GO" id="GO:0006412">
    <property type="term" value="P:translation"/>
    <property type="evidence" value="ECO:0007669"/>
    <property type="project" value="UniProtKB-UniRule"/>
</dbReference>
<dbReference type="FunFam" id="3.30.1440.10:FF:000001">
    <property type="entry name" value="50S ribosomal protein L5"/>
    <property type="match status" value="1"/>
</dbReference>
<dbReference type="Gene3D" id="3.30.1440.10">
    <property type="match status" value="1"/>
</dbReference>
<dbReference type="HAMAP" id="MF_01333_B">
    <property type="entry name" value="Ribosomal_uL5_B"/>
    <property type="match status" value="1"/>
</dbReference>
<dbReference type="InterPro" id="IPR002132">
    <property type="entry name" value="Ribosomal_uL5"/>
</dbReference>
<dbReference type="InterPro" id="IPR020930">
    <property type="entry name" value="Ribosomal_uL5_bac-type"/>
</dbReference>
<dbReference type="InterPro" id="IPR031309">
    <property type="entry name" value="Ribosomal_uL5_C"/>
</dbReference>
<dbReference type="InterPro" id="IPR020929">
    <property type="entry name" value="Ribosomal_uL5_CS"/>
</dbReference>
<dbReference type="InterPro" id="IPR022803">
    <property type="entry name" value="Ribosomal_uL5_dom_sf"/>
</dbReference>
<dbReference type="InterPro" id="IPR031310">
    <property type="entry name" value="Ribosomal_uL5_N"/>
</dbReference>
<dbReference type="NCBIfam" id="NF000585">
    <property type="entry name" value="PRK00010.1"/>
    <property type="match status" value="1"/>
</dbReference>
<dbReference type="PANTHER" id="PTHR11994">
    <property type="entry name" value="60S RIBOSOMAL PROTEIN L11-RELATED"/>
    <property type="match status" value="1"/>
</dbReference>
<dbReference type="Pfam" id="PF00281">
    <property type="entry name" value="Ribosomal_L5"/>
    <property type="match status" value="1"/>
</dbReference>
<dbReference type="Pfam" id="PF00673">
    <property type="entry name" value="Ribosomal_L5_C"/>
    <property type="match status" value="1"/>
</dbReference>
<dbReference type="PIRSF" id="PIRSF002161">
    <property type="entry name" value="Ribosomal_L5"/>
    <property type="match status" value="1"/>
</dbReference>
<dbReference type="SUPFAM" id="SSF55282">
    <property type="entry name" value="RL5-like"/>
    <property type="match status" value="1"/>
</dbReference>
<dbReference type="PROSITE" id="PS00358">
    <property type="entry name" value="RIBOSOMAL_L5"/>
    <property type="match status" value="1"/>
</dbReference>